<reference key="1">
    <citation type="journal article" date="2003" name="Lancet">
        <title>Genome sequence of Vibrio parahaemolyticus: a pathogenic mechanism distinct from that of V. cholerae.</title>
        <authorList>
            <person name="Makino K."/>
            <person name="Oshima K."/>
            <person name="Kurokawa K."/>
            <person name="Yokoyama K."/>
            <person name="Uda T."/>
            <person name="Tagomori K."/>
            <person name="Iijima Y."/>
            <person name="Najima M."/>
            <person name="Nakano M."/>
            <person name="Yamashita A."/>
            <person name="Kubota Y."/>
            <person name="Kimura S."/>
            <person name="Yasunaga T."/>
            <person name="Honda T."/>
            <person name="Shinagawa H."/>
            <person name="Hattori M."/>
            <person name="Iida T."/>
        </authorList>
    </citation>
    <scope>NUCLEOTIDE SEQUENCE [LARGE SCALE GENOMIC DNA]</scope>
    <source>
        <strain>RIMD 2210633</strain>
    </source>
</reference>
<keyword id="KW-0067">ATP-binding</keyword>
<keyword id="KW-0963">Cytoplasm</keyword>
<keyword id="KW-0418">Kinase</keyword>
<keyword id="KW-0547">Nucleotide-binding</keyword>
<keyword id="KW-0808">Transferase</keyword>
<accession>Q87N09</accession>
<organism>
    <name type="scientific">Vibrio parahaemolyticus serotype O3:K6 (strain RIMD 2210633)</name>
    <dbReference type="NCBI Taxonomy" id="223926"/>
    <lineage>
        <taxon>Bacteria</taxon>
        <taxon>Pseudomonadati</taxon>
        <taxon>Pseudomonadota</taxon>
        <taxon>Gammaproteobacteria</taxon>
        <taxon>Vibrionales</taxon>
        <taxon>Vibrionaceae</taxon>
        <taxon>Vibrio</taxon>
    </lineage>
</organism>
<dbReference type="EC" id="2.7.1.48" evidence="1"/>
<dbReference type="EMBL" id="BA000031">
    <property type="protein sequence ID" value="BAC60330.1"/>
    <property type="molecule type" value="Genomic_DNA"/>
</dbReference>
<dbReference type="RefSeq" id="NP_798446.1">
    <property type="nucleotide sequence ID" value="NC_004603.1"/>
</dbReference>
<dbReference type="RefSeq" id="WP_005461598.1">
    <property type="nucleotide sequence ID" value="NC_004603.1"/>
</dbReference>
<dbReference type="SMR" id="Q87N09"/>
<dbReference type="GeneID" id="1189578"/>
<dbReference type="KEGG" id="vpa:VP2067"/>
<dbReference type="PATRIC" id="fig|223926.6.peg.1977"/>
<dbReference type="eggNOG" id="COG0572">
    <property type="taxonomic scope" value="Bacteria"/>
</dbReference>
<dbReference type="HOGENOM" id="CLU_021278_1_2_6"/>
<dbReference type="UniPathway" id="UPA00574">
    <property type="reaction ID" value="UER00637"/>
</dbReference>
<dbReference type="UniPathway" id="UPA00579">
    <property type="reaction ID" value="UER00640"/>
</dbReference>
<dbReference type="Proteomes" id="UP000002493">
    <property type="component" value="Chromosome 1"/>
</dbReference>
<dbReference type="GO" id="GO:0005737">
    <property type="term" value="C:cytoplasm"/>
    <property type="evidence" value="ECO:0007669"/>
    <property type="project" value="UniProtKB-SubCell"/>
</dbReference>
<dbReference type="GO" id="GO:0005524">
    <property type="term" value="F:ATP binding"/>
    <property type="evidence" value="ECO:0007669"/>
    <property type="project" value="UniProtKB-UniRule"/>
</dbReference>
<dbReference type="GO" id="GO:0043771">
    <property type="term" value="F:cytidine kinase activity"/>
    <property type="evidence" value="ECO:0007669"/>
    <property type="project" value="RHEA"/>
</dbReference>
<dbReference type="GO" id="GO:0004849">
    <property type="term" value="F:uridine kinase activity"/>
    <property type="evidence" value="ECO:0007669"/>
    <property type="project" value="UniProtKB-UniRule"/>
</dbReference>
<dbReference type="GO" id="GO:0044211">
    <property type="term" value="P:CTP salvage"/>
    <property type="evidence" value="ECO:0007669"/>
    <property type="project" value="UniProtKB-UniRule"/>
</dbReference>
<dbReference type="GO" id="GO:0044206">
    <property type="term" value="P:UMP salvage"/>
    <property type="evidence" value="ECO:0007669"/>
    <property type="project" value="UniProtKB-UniRule"/>
</dbReference>
<dbReference type="CDD" id="cd02023">
    <property type="entry name" value="UMPK"/>
    <property type="match status" value="1"/>
</dbReference>
<dbReference type="FunFam" id="3.40.50.300:FF:000252">
    <property type="entry name" value="Uridine kinase"/>
    <property type="match status" value="1"/>
</dbReference>
<dbReference type="Gene3D" id="3.40.50.300">
    <property type="entry name" value="P-loop containing nucleotide triphosphate hydrolases"/>
    <property type="match status" value="1"/>
</dbReference>
<dbReference type="HAMAP" id="MF_00551">
    <property type="entry name" value="Uridine_kinase"/>
    <property type="match status" value="1"/>
</dbReference>
<dbReference type="InterPro" id="IPR027417">
    <property type="entry name" value="P-loop_NTPase"/>
</dbReference>
<dbReference type="InterPro" id="IPR006083">
    <property type="entry name" value="PRK/URK"/>
</dbReference>
<dbReference type="InterPro" id="IPR026008">
    <property type="entry name" value="Uridine_kinase"/>
</dbReference>
<dbReference type="InterPro" id="IPR000764">
    <property type="entry name" value="Uridine_kinase-like"/>
</dbReference>
<dbReference type="NCBIfam" id="NF004018">
    <property type="entry name" value="PRK05480.1"/>
    <property type="match status" value="1"/>
</dbReference>
<dbReference type="NCBIfam" id="TIGR00235">
    <property type="entry name" value="udk"/>
    <property type="match status" value="1"/>
</dbReference>
<dbReference type="PANTHER" id="PTHR10285">
    <property type="entry name" value="URIDINE KINASE"/>
    <property type="match status" value="1"/>
</dbReference>
<dbReference type="Pfam" id="PF00485">
    <property type="entry name" value="PRK"/>
    <property type="match status" value="1"/>
</dbReference>
<dbReference type="PRINTS" id="PR00988">
    <property type="entry name" value="URIDINKINASE"/>
</dbReference>
<dbReference type="SUPFAM" id="SSF52540">
    <property type="entry name" value="P-loop containing nucleoside triphosphate hydrolases"/>
    <property type="match status" value="1"/>
</dbReference>
<feature type="chain" id="PRO_0000164507" description="Uridine kinase">
    <location>
        <begin position="1"/>
        <end position="213"/>
    </location>
</feature>
<feature type="binding site" evidence="1">
    <location>
        <begin position="14"/>
        <end position="21"/>
    </location>
    <ligand>
        <name>ATP</name>
        <dbReference type="ChEBI" id="CHEBI:30616"/>
    </ligand>
</feature>
<gene>
    <name evidence="1" type="primary">udk</name>
    <name type="ordered locus">VP2067</name>
</gene>
<evidence type="ECO:0000255" key="1">
    <source>
        <dbReference type="HAMAP-Rule" id="MF_00551"/>
    </source>
</evidence>
<protein>
    <recommendedName>
        <fullName evidence="1">Uridine kinase</fullName>
        <ecNumber evidence="1">2.7.1.48</ecNumber>
    </recommendedName>
    <alternativeName>
        <fullName evidence="1">Cytidine monophosphokinase</fullName>
    </alternativeName>
    <alternativeName>
        <fullName evidence="1">Uridine monophosphokinase</fullName>
    </alternativeName>
</protein>
<name>URK_VIBPA</name>
<proteinExistence type="inferred from homology"/>
<comment type="catalytic activity">
    <reaction evidence="1">
        <text>uridine + ATP = UMP + ADP + H(+)</text>
        <dbReference type="Rhea" id="RHEA:16825"/>
        <dbReference type="ChEBI" id="CHEBI:15378"/>
        <dbReference type="ChEBI" id="CHEBI:16704"/>
        <dbReference type="ChEBI" id="CHEBI:30616"/>
        <dbReference type="ChEBI" id="CHEBI:57865"/>
        <dbReference type="ChEBI" id="CHEBI:456216"/>
        <dbReference type="EC" id="2.7.1.48"/>
    </reaction>
</comment>
<comment type="catalytic activity">
    <reaction evidence="1">
        <text>cytidine + ATP = CMP + ADP + H(+)</text>
        <dbReference type="Rhea" id="RHEA:24674"/>
        <dbReference type="ChEBI" id="CHEBI:15378"/>
        <dbReference type="ChEBI" id="CHEBI:17562"/>
        <dbReference type="ChEBI" id="CHEBI:30616"/>
        <dbReference type="ChEBI" id="CHEBI:60377"/>
        <dbReference type="ChEBI" id="CHEBI:456216"/>
        <dbReference type="EC" id="2.7.1.48"/>
    </reaction>
</comment>
<comment type="pathway">
    <text evidence="1">Pyrimidine metabolism; CTP biosynthesis via salvage pathway; CTP from cytidine: step 1/3.</text>
</comment>
<comment type="pathway">
    <text evidence="1">Pyrimidine metabolism; UMP biosynthesis via salvage pathway; UMP from uridine: step 1/1.</text>
</comment>
<comment type="subcellular location">
    <subcellularLocation>
        <location evidence="1">Cytoplasm</location>
    </subcellularLocation>
</comment>
<comment type="similarity">
    <text evidence="1">Belongs to the uridine kinase family.</text>
</comment>
<sequence>MSDNNQCVIVGIAGASASGKSLIASTIYNELRAKVGDHQIGVITEDCYYNDQSHLSMEERVKTNYDHPSALDHDLLCEHLEKLVRGEAVEVPEYSYTEHTRTSNTTTMTPKKVIILEGILLLTDPRLRDLMHATVFMDTPLDICLLRRVKRDVEERGRTMESVLKQYQQTVRPMFMQFIEPSKQYADIIVPRGGKNRIAIDVLKAHIAKLLKA</sequence>